<accession>P33290</accession>
<dbReference type="EC" id="2.3.1.16"/>
<dbReference type="EMBL" id="D17320">
    <property type="protein sequence ID" value="BAA04142.1"/>
    <property type="molecule type" value="Genomic_DNA"/>
</dbReference>
<dbReference type="SMR" id="P33290"/>
<dbReference type="VEuPathDB" id="FungiDB:CTMYA2_042690"/>
<dbReference type="VEuPathDB" id="FungiDB:CTRG_01068"/>
<dbReference type="SABIO-RK" id="P33290"/>
<dbReference type="UniPathway" id="UPA00199"/>
<dbReference type="GO" id="GO:0005777">
    <property type="term" value="C:peroxisome"/>
    <property type="evidence" value="ECO:0007669"/>
    <property type="project" value="UniProtKB-SubCell"/>
</dbReference>
<dbReference type="GO" id="GO:0003988">
    <property type="term" value="F:acetyl-CoA C-acyltransferase activity"/>
    <property type="evidence" value="ECO:0007669"/>
    <property type="project" value="UniProtKB-EC"/>
</dbReference>
<dbReference type="GO" id="GO:0006635">
    <property type="term" value="P:fatty acid beta-oxidation"/>
    <property type="evidence" value="ECO:0007669"/>
    <property type="project" value="TreeGrafter"/>
</dbReference>
<dbReference type="GO" id="GO:0010124">
    <property type="term" value="P:phenylacetate catabolic process"/>
    <property type="evidence" value="ECO:0007669"/>
    <property type="project" value="TreeGrafter"/>
</dbReference>
<dbReference type="CDD" id="cd00751">
    <property type="entry name" value="thiolase"/>
    <property type="match status" value="1"/>
</dbReference>
<dbReference type="Gene3D" id="3.40.47.10">
    <property type="match status" value="2"/>
</dbReference>
<dbReference type="InterPro" id="IPR002155">
    <property type="entry name" value="Thiolase"/>
</dbReference>
<dbReference type="InterPro" id="IPR016039">
    <property type="entry name" value="Thiolase-like"/>
</dbReference>
<dbReference type="InterPro" id="IPR050215">
    <property type="entry name" value="Thiolase-like_sf_Thiolase"/>
</dbReference>
<dbReference type="InterPro" id="IPR020615">
    <property type="entry name" value="Thiolase_acyl_enz_int_AS"/>
</dbReference>
<dbReference type="InterPro" id="IPR020610">
    <property type="entry name" value="Thiolase_AS"/>
</dbReference>
<dbReference type="InterPro" id="IPR020617">
    <property type="entry name" value="Thiolase_C"/>
</dbReference>
<dbReference type="InterPro" id="IPR020613">
    <property type="entry name" value="Thiolase_CS"/>
</dbReference>
<dbReference type="InterPro" id="IPR020616">
    <property type="entry name" value="Thiolase_N"/>
</dbReference>
<dbReference type="NCBIfam" id="TIGR01930">
    <property type="entry name" value="AcCoA-C-Actrans"/>
    <property type="match status" value="1"/>
</dbReference>
<dbReference type="PANTHER" id="PTHR43853">
    <property type="entry name" value="3-KETOACYL-COA THIOLASE, PEROXISOMAL"/>
    <property type="match status" value="1"/>
</dbReference>
<dbReference type="PANTHER" id="PTHR43853:SF8">
    <property type="entry name" value="3-KETOACYL-COA THIOLASE, PEROXISOMAL"/>
    <property type="match status" value="1"/>
</dbReference>
<dbReference type="Pfam" id="PF02803">
    <property type="entry name" value="Thiolase_C"/>
    <property type="match status" value="1"/>
</dbReference>
<dbReference type="Pfam" id="PF00108">
    <property type="entry name" value="Thiolase_N"/>
    <property type="match status" value="1"/>
</dbReference>
<dbReference type="PIRSF" id="PIRSF000429">
    <property type="entry name" value="Ac-CoA_Ac_transf"/>
    <property type="match status" value="1"/>
</dbReference>
<dbReference type="SUPFAM" id="SSF53901">
    <property type="entry name" value="Thiolase-like"/>
    <property type="match status" value="2"/>
</dbReference>
<dbReference type="PROSITE" id="PS00098">
    <property type="entry name" value="THIOLASE_1"/>
    <property type="match status" value="1"/>
</dbReference>
<dbReference type="PROSITE" id="PS00737">
    <property type="entry name" value="THIOLASE_2"/>
    <property type="match status" value="1"/>
</dbReference>
<dbReference type="PROSITE" id="PS00099">
    <property type="entry name" value="THIOLASE_3"/>
    <property type="match status" value="1"/>
</dbReference>
<evidence type="ECO:0000250" key="1"/>
<evidence type="ECO:0000255" key="2">
    <source>
        <dbReference type="PROSITE-ProRule" id="PRU10020"/>
    </source>
</evidence>
<evidence type="ECO:0000305" key="3"/>
<protein>
    <recommendedName>
        <fullName>3-ketoacyl-CoA thiolase A, peroxisomal</fullName>
        <ecNumber>2.3.1.16</ecNumber>
    </recommendedName>
    <alternativeName>
        <fullName>Acetyl-CoA acyltransferase A</fullName>
    </alternativeName>
    <alternativeName>
        <fullName>Beta-ketothiolase A</fullName>
    </alternativeName>
    <alternativeName>
        <fullName>Peroxisomal 3-oxoacyl-CoA thiolase A</fullName>
    </alternativeName>
    <alternativeName>
        <fullName>Thiolase IA</fullName>
    </alternativeName>
</protein>
<sequence>MDRLNQLSGQLKPNAKQSILQKNPDDVVIVAAYRTAIGKGFKGSFRSVRSEFILTEFLKEFIKKTNIDPSLIEDVAIGNVLNQAAGATEHRGACLAAGIPYTAAFIAVNRFCSSGLMAISDIANKIKTGEIECGLAGGAESMSTNYRDPRVAPRIDPHLADDAQMEKCLIPMGITNENVANQFNISRERQDEFAAKSYNKAAKAVAAGAFKSEILPIRSIIRNSDGTEKEIIVDTDEGPREGVTAESLGKLRPAFDGTTTAGNASQVSDGAAAVLLMKRSLAEAKGYPIIGKYVLCSTAGVPPEIMGVGPAYAIPEVLKRTGLTVDDIDVFEINEAFAAQCLYSAEQVNVPEEKLNINGGAIALGHPLGETGARQYATIIPLLKPGQIGLTSMCIGSGMGSASILVRE</sequence>
<name>THIKA_CANTR</name>
<proteinExistence type="inferred from homology"/>
<keyword id="KW-0012">Acyltransferase</keyword>
<keyword id="KW-0276">Fatty acid metabolism</keyword>
<keyword id="KW-0443">Lipid metabolism</keyword>
<keyword id="KW-0576">Peroxisome</keyword>
<keyword id="KW-0808">Transferase</keyword>
<keyword id="KW-0809">Transit peptide</keyword>
<feature type="transit peptide" description="Peroxisome">
    <location>
        <begin position="1"/>
        <end status="unknown"/>
    </location>
</feature>
<feature type="chain" id="PRO_0000034075" description="3-ketoacyl-CoA thiolase A, peroxisomal">
    <location>
        <begin status="unknown"/>
        <end position="408"/>
    </location>
</feature>
<feature type="active site" description="Acyl-thioester intermediate" evidence="1">
    <location>
        <position position="112"/>
    </location>
</feature>
<feature type="active site" description="Proton acceptor" evidence="2">
    <location>
        <position position="366"/>
    </location>
</feature>
<feature type="active site" description="Proton acceptor" evidence="2">
    <location>
        <position position="394"/>
    </location>
</feature>
<reference key="1">
    <citation type="journal article" date="1992" name="Eur. J. Biochem.">
        <title>Peroxisomal acetoacetyl-CoA thiolase of an n-alkane-utilizing yeast, Candida tropicalis.</title>
        <authorList>
            <person name="Kurihara T."/>
            <person name="Ueda M."/>
            <person name="Kanayama N."/>
            <person name="Kondo J."/>
            <person name="Teranishi Y."/>
            <person name="Tanaka A."/>
        </authorList>
    </citation>
    <scope>NUCLEOTIDE SEQUENCE [GENOMIC DNA]</scope>
    <source>
        <strain>ATCC 20336 / pK233 / NCYC 997</strain>
    </source>
</reference>
<comment type="catalytic activity">
    <reaction>
        <text>an acyl-CoA + acetyl-CoA = a 3-oxoacyl-CoA + CoA</text>
        <dbReference type="Rhea" id="RHEA:21564"/>
        <dbReference type="ChEBI" id="CHEBI:57287"/>
        <dbReference type="ChEBI" id="CHEBI:57288"/>
        <dbReference type="ChEBI" id="CHEBI:58342"/>
        <dbReference type="ChEBI" id="CHEBI:90726"/>
        <dbReference type="EC" id="2.3.1.16"/>
    </reaction>
</comment>
<comment type="pathway">
    <text>Lipid metabolism; fatty acid metabolism.</text>
</comment>
<comment type="subunit">
    <text evidence="1">Homodimer.</text>
</comment>
<comment type="subcellular location">
    <subcellularLocation>
        <location>Peroxisome</location>
    </subcellularLocation>
</comment>
<comment type="similarity">
    <text evidence="3">Belongs to the thiolase-like superfamily. Thiolase family.</text>
</comment>
<organism>
    <name type="scientific">Candida tropicalis</name>
    <name type="common">Yeast</name>
    <dbReference type="NCBI Taxonomy" id="5482"/>
    <lineage>
        <taxon>Eukaryota</taxon>
        <taxon>Fungi</taxon>
        <taxon>Dikarya</taxon>
        <taxon>Ascomycota</taxon>
        <taxon>Saccharomycotina</taxon>
        <taxon>Pichiomycetes</taxon>
        <taxon>Debaryomycetaceae</taxon>
        <taxon>Candida/Lodderomyces clade</taxon>
        <taxon>Candida</taxon>
    </lineage>
</organism>